<accession>O35963</accession>
<accession>Q3TWI8</accession>
<dbReference type="EC" id="3.6.5.2" evidence="3"/>
<dbReference type="EMBL" id="AB004665">
    <property type="protein sequence ID" value="BAA22655.1"/>
    <property type="molecule type" value="mRNA"/>
</dbReference>
<dbReference type="EMBL" id="AB004664">
    <property type="protein sequence ID" value="BAA22654.1"/>
    <property type="molecule type" value="Genomic_DNA"/>
</dbReference>
<dbReference type="EMBL" id="AK004974">
    <property type="protein sequence ID" value="BAB23710.1"/>
    <property type="molecule type" value="mRNA"/>
</dbReference>
<dbReference type="EMBL" id="AK087967">
    <property type="protein sequence ID" value="BAC40064.1"/>
    <property type="molecule type" value="mRNA"/>
</dbReference>
<dbReference type="EMBL" id="AK139821">
    <property type="protein sequence ID" value="BAE24147.1"/>
    <property type="molecule type" value="mRNA"/>
</dbReference>
<dbReference type="EMBL" id="AK159674">
    <property type="protein sequence ID" value="BAE35278.1"/>
    <property type="molecule type" value="mRNA"/>
</dbReference>
<dbReference type="EMBL" id="BC065076">
    <property type="protein sequence ID" value="AAH65076.1"/>
    <property type="molecule type" value="mRNA"/>
</dbReference>
<dbReference type="CCDS" id="CCDS38427.1"/>
<dbReference type="RefSeq" id="NP_058554.1">
    <property type="nucleotide sequence ID" value="NM_016858.2"/>
</dbReference>
<dbReference type="PDB" id="1Z06">
    <property type="method" value="X-ray"/>
    <property type="resolution" value="1.81 A"/>
    <property type="chains" value="A=30-202"/>
</dbReference>
<dbReference type="PDB" id="2G77">
    <property type="method" value="X-ray"/>
    <property type="resolution" value="2.26 A"/>
    <property type="chains" value="B=14-202"/>
</dbReference>
<dbReference type="PDB" id="6SUR">
    <property type="method" value="X-ray"/>
    <property type="resolution" value="3.47 A"/>
    <property type="chains" value="A/B/C/D/E/F=30-202"/>
</dbReference>
<dbReference type="PDBsum" id="1Z06"/>
<dbReference type="PDBsum" id="2G77"/>
<dbReference type="PDBsum" id="6SUR"/>
<dbReference type="SMR" id="O35963"/>
<dbReference type="BioGRID" id="202543">
    <property type="interactions" value="10"/>
</dbReference>
<dbReference type="DIP" id="DIP-60512N"/>
<dbReference type="FunCoup" id="O35963">
    <property type="interactions" value="2516"/>
</dbReference>
<dbReference type="IntAct" id="O35963">
    <property type="interactions" value="23"/>
</dbReference>
<dbReference type="MINT" id="O35963"/>
<dbReference type="STRING" id="10090.ENSMUSP00000063054"/>
<dbReference type="iPTMnet" id="O35963"/>
<dbReference type="PhosphoSitePlus" id="O35963"/>
<dbReference type="SwissPalm" id="O35963"/>
<dbReference type="jPOST" id="O35963"/>
<dbReference type="PaxDb" id="10090-ENSMUSP00000063054"/>
<dbReference type="PeptideAtlas" id="O35963"/>
<dbReference type="ProteomicsDB" id="300356"/>
<dbReference type="Pumba" id="O35963"/>
<dbReference type="Antibodypedia" id="27146">
    <property type="antibodies" value="76 antibodies from 23 providers"/>
</dbReference>
<dbReference type="DNASU" id="19338"/>
<dbReference type="Ensembl" id="ENSMUST00000054387.8">
    <property type="protein sequence ID" value="ENSMUSP00000063054.7"/>
    <property type="gene ID" value="ENSMUSG00000027739.10"/>
</dbReference>
<dbReference type="GeneID" id="19338"/>
<dbReference type="KEGG" id="mmu:19338"/>
<dbReference type="UCSC" id="uc008pea.1">
    <property type="organism name" value="mouse"/>
</dbReference>
<dbReference type="AGR" id="MGI:1330805"/>
<dbReference type="CTD" id="83452"/>
<dbReference type="MGI" id="MGI:1330805">
    <property type="gene designation" value="Rab33b"/>
</dbReference>
<dbReference type="VEuPathDB" id="HostDB:ENSMUSG00000027739"/>
<dbReference type="eggNOG" id="KOG0084">
    <property type="taxonomic scope" value="Eukaryota"/>
</dbReference>
<dbReference type="GeneTree" id="ENSGT00940000157090"/>
<dbReference type="HOGENOM" id="CLU_041217_10_3_1"/>
<dbReference type="InParanoid" id="O35963"/>
<dbReference type="OMA" id="PLWIEEC"/>
<dbReference type="OrthoDB" id="10006973at2759"/>
<dbReference type="PhylomeDB" id="O35963"/>
<dbReference type="TreeFam" id="TF300097"/>
<dbReference type="Reactome" id="R-MMU-6811438">
    <property type="pathway name" value="Intra-Golgi traffic"/>
</dbReference>
<dbReference type="Reactome" id="R-MMU-8854214">
    <property type="pathway name" value="TBC/RABGAPs"/>
</dbReference>
<dbReference type="Reactome" id="R-MMU-8873719">
    <property type="pathway name" value="RAB geranylgeranylation"/>
</dbReference>
<dbReference type="BioGRID-ORCS" id="19338">
    <property type="hits" value="4 hits in 80 CRISPR screens"/>
</dbReference>
<dbReference type="EvolutionaryTrace" id="O35963"/>
<dbReference type="PRO" id="PR:O35963"/>
<dbReference type="Proteomes" id="UP000000589">
    <property type="component" value="Chromosome 3"/>
</dbReference>
<dbReference type="RNAct" id="O35963">
    <property type="molecule type" value="protein"/>
</dbReference>
<dbReference type="Bgee" id="ENSMUSG00000027739">
    <property type="expression patterns" value="Expressed in urinary bladder urothelium and 262 other cell types or tissues"/>
</dbReference>
<dbReference type="ExpressionAtlas" id="O35963">
    <property type="expression patterns" value="baseline and differential"/>
</dbReference>
<dbReference type="GO" id="GO:0005796">
    <property type="term" value="C:Golgi lumen"/>
    <property type="evidence" value="ECO:0000314"/>
    <property type="project" value="UniProtKB"/>
</dbReference>
<dbReference type="GO" id="GO:0000139">
    <property type="term" value="C:Golgi membrane"/>
    <property type="evidence" value="ECO:0000250"/>
    <property type="project" value="UniProtKB"/>
</dbReference>
<dbReference type="GO" id="GO:0034045">
    <property type="term" value="C:phagophore assembly site membrane"/>
    <property type="evidence" value="ECO:0000250"/>
    <property type="project" value="UniProtKB"/>
</dbReference>
<dbReference type="GO" id="GO:0098793">
    <property type="term" value="C:presynapse"/>
    <property type="evidence" value="ECO:0007669"/>
    <property type="project" value="Ensembl"/>
</dbReference>
<dbReference type="GO" id="GO:0003925">
    <property type="term" value="F:G protein activity"/>
    <property type="evidence" value="ECO:0000315"/>
    <property type="project" value="UniProtKB"/>
</dbReference>
<dbReference type="GO" id="GO:0005525">
    <property type="term" value="F:GTP binding"/>
    <property type="evidence" value="ECO:0007669"/>
    <property type="project" value="UniProtKB-KW"/>
</dbReference>
<dbReference type="GO" id="GO:0000045">
    <property type="term" value="P:autophagosome assembly"/>
    <property type="evidence" value="ECO:0000315"/>
    <property type="project" value="GO_Central"/>
</dbReference>
<dbReference type="GO" id="GO:0006891">
    <property type="term" value="P:intra-Golgi vesicle-mediated transport"/>
    <property type="evidence" value="ECO:0007669"/>
    <property type="project" value="Ensembl"/>
</dbReference>
<dbReference type="GO" id="GO:1903434">
    <property type="term" value="P:negative regulation of constitutive secretory pathway"/>
    <property type="evidence" value="ECO:0007669"/>
    <property type="project" value="Ensembl"/>
</dbReference>
<dbReference type="GO" id="GO:0034067">
    <property type="term" value="P:protein localization to Golgi apparatus"/>
    <property type="evidence" value="ECO:0007669"/>
    <property type="project" value="Ensembl"/>
</dbReference>
<dbReference type="GO" id="GO:0034497">
    <property type="term" value="P:protein localization to phagophore assembly site"/>
    <property type="evidence" value="ECO:0000250"/>
    <property type="project" value="UniProtKB"/>
</dbReference>
<dbReference type="GO" id="GO:0015031">
    <property type="term" value="P:protein transport"/>
    <property type="evidence" value="ECO:0007669"/>
    <property type="project" value="UniProtKB-KW"/>
</dbReference>
<dbReference type="GO" id="GO:0032482">
    <property type="term" value="P:Rab protein signal transduction"/>
    <property type="evidence" value="ECO:0007669"/>
    <property type="project" value="InterPro"/>
</dbReference>
<dbReference type="GO" id="GO:1903358">
    <property type="term" value="P:regulation of Golgi organization"/>
    <property type="evidence" value="ECO:0007669"/>
    <property type="project" value="Ensembl"/>
</dbReference>
<dbReference type="GO" id="GO:2000156">
    <property type="term" value="P:regulation of retrograde vesicle-mediated transport, Golgi to ER"/>
    <property type="evidence" value="ECO:0000250"/>
    <property type="project" value="UniProtKB"/>
</dbReference>
<dbReference type="GO" id="GO:0048705">
    <property type="term" value="P:skeletal system morphogenesis"/>
    <property type="evidence" value="ECO:0007669"/>
    <property type="project" value="Ensembl"/>
</dbReference>
<dbReference type="CDD" id="cd04115">
    <property type="entry name" value="Rab33B_Rab33A"/>
    <property type="match status" value="1"/>
</dbReference>
<dbReference type="FunFam" id="3.40.50.300:FF:000516">
    <property type="entry name" value="RAB33B, member RAS oncogene family"/>
    <property type="match status" value="1"/>
</dbReference>
<dbReference type="Gene3D" id="3.40.50.300">
    <property type="entry name" value="P-loop containing nucleotide triphosphate hydrolases"/>
    <property type="match status" value="1"/>
</dbReference>
<dbReference type="InterPro" id="IPR027417">
    <property type="entry name" value="P-loop_NTPase"/>
</dbReference>
<dbReference type="InterPro" id="IPR041822">
    <property type="entry name" value="Rab33A/B"/>
</dbReference>
<dbReference type="InterPro" id="IPR005225">
    <property type="entry name" value="Small_GTP-bd"/>
</dbReference>
<dbReference type="InterPro" id="IPR001806">
    <property type="entry name" value="Small_GTPase"/>
</dbReference>
<dbReference type="NCBIfam" id="TIGR00231">
    <property type="entry name" value="small_GTP"/>
    <property type="match status" value="1"/>
</dbReference>
<dbReference type="PANTHER" id="PTHR47978">
    <property type="match status" value="1"/>
</dbReference>
<dbReference type="Pfam" id="PF00071">
    <property type="entry name" value="Ras"/>
    <property type="match status" value="1"/>
</dbReference>
<dbReference type="PRINTS" id="PR00449">
    <property type="entry name" value="RASTRNSFRMNG"/>
</dbReference>
<dbReference type="SMART" id="SM00175">
    <property type="entry name" value="RAB"/>
    <property type="match status" value="1"/>
</dbReference>
<dbReference type="SMART" id="SM00176">
    <property type="entry name" value="RAN"/>
    <property type="match status" value="1"/>
</dbReference>
<dbReference type="SMART" id="SM00173">
    <property type="entry name" value="RAS"/>
    <property type="match status" value="1"/>
</dbReference>
<dbReference type="SMART" id="SM00174">
    <property type="entry name" value="RHO"/>
    <property type="match status" value="1"/>
</dbReference>
<dbReference type="SUPFAM" id="SSF52540">
    <property type="entry name" value="P-loop containing nucleoside triphosphate hydrolases"/>
    <property type="match status" value="1"/>
</dbReference>
<dbReference type="PROSITE" id="PS51419">
    <property type="entry name" value="RAB"/>
    <property type="match status" value="1"/>
</dbReference>
<gene>
    <name evidence="9" type="primary">Rab33b</name>
</gene>
<organism>
    <name type="scientific">Mus musculus</name>
    <name type="common">Mouse</name>
    <dbReference type="NCBI Taxonomy" id="10090"/>
    <lineage>
        <taxon>Eukaryota</taxon>
        <taxon>Metazoa</taxon>
        <taxon>Chordata</taxon>
        <taxon>Craniata</taxon>
        <taxon>Vertebrata</taxon>
        <taxon>Euteleostomi</taxon>
        <taxon>Mammalia</taxon>
        <taxon>Eutheria</taxon>
        <taxon>Euarchontoglires</taxon>
        <taxon>Glires</taxon>
        <taxon>Rodentia</taxon>
        <taxon>Myomorpha</taxon>
        <taxon>Muroidea</taxon>
        <taxon>Muridae</taxon>
        <taxon>Murinae</taxon>
        <taxon>Mus</taxon>
        <taxon>Mus</taxon>
    </lineage>
</organism>
<feature type="chain" id="PRO_0000121240" description="Ras-related protein Rab-33B">
    <location>
        <begin position="1"/>
        <end position="229"/>
    </location>
</feature>
<feature type="short sequence motif" description="Switch 1" evidence="2">
    <location>
        <begin position="56"/>
        <end position="68"/>
    </location>
</feature>
<feature type="short sequence motif" description="Switch 2" evidence="2">
    <location>
        <begin position="89"/>
        <end position="108"/>
    </location>
</feature>
<feature type="binding site" evidence="2">
    <location>
        <position position="43"/>
    </location>
    <ligand>
        <name>GTP</name>
        <dbReference type="ChEBI" id="CHEBI:37565"/>
    </ligand>
</feature>
<feature type="binding site" evidence="2">
    <location>
        <position position="44"/>
    </location>
    <ligand>
        <name>GTP</name>
        <dbReference type="ChEBI" id="CHEBI:37565"/>
    </ligand>
</feature>
<feature type="binding site" evidence="2">
    <location>
        <position position="45"/>
    </location>
    <ligand>
        <name>GTP</name>
        <dbReference type="ChEBI" id="CHEBI:37565"/>
    </ligand>
</feature>
<feature type="binding site" evidence="2">
    <location>
        <position position="46"/>
    </location>
    <ligand>
        <name>GTP</name>
        <dbReference type="ChEBI" id="CHEBI:37565"/>
    </ligand>
</feature>
<feature type="binding site" evidence="2">
    <location>
        <position position="47"/>
    </location>
    <ligand>
        <name>GTP</name>
        <dbReference type="ChEBI" id="CHEBI:37565"/>
    </ligand>
</feature>
<feature type="binding site" evidence="2">
    <location>
        <position position="47"/>
    </location>
    <ligand>
        <name>Mg(2+)</name>
        <dbReference type="ChEBI" id="CHEBI:18420"/>
    </ligand>
</feature>
<feature type="binding site" evidence="2">
    <location>
        <position position="48"/>
    </location>
    <ligand>
        <name>GTP</name>
        <dbReference type="ChEBI" id="CHEBI:37565"/>
    </ligand>
</feature>
<feature type="binding site" evidence="2">
    <location>
        <position position="62"/>
    </location>
    <ligand>
        <name>GTP</name>
        <dbReference type="ChEBI" id="CHEBI:37565"/>
    </ligand>
</feature>
<feature type="binding site" evidence="2">
    <location>
        <position position="65"/>
    </location>
    <ligand>
        <name>GTP</name>
        <dbReference type="ChEBI" id="CHEBI:37565"/>
    </ligand>
</feature>
<feature type="binding site" evidence="2">
    <location>
        <position position="65"/>
    </location>
    <ligand>
        <name>Mg(2+)</name>
        <dbReference type="ChEBI" id="CHEBI:18420"/>
    </ligand>
</feature>
<feature type="binding site" evidence="2">
    <location>
        <position position="88"/>
    </location>
    <ligand>
        <name>Mg(2+)</name>
        <dbReference type="ChEBI" id="CHEBI:18420"/>
    </ligand>
</feature>
<feature type="binding site" evidence="2">
    <location>
        <position position="91"/>
    </location>
    <ligand>
        <name>GTP</name>
        <dbReference type="ChEBI" id="CHEBI:37565"/>
    </ligand>
</feature>
<feature type="binding site" evidence="2">
    <location>
        <position position="148"/>
    </location>
    <ligand>
        <name>GTP</name>
        <dbReference type="ChEBI" id="CHEBI:37565"/>
    </ligand>
</feature>
<feature type="binding site" evidence="2">
    <location>
        <position position="149"/>
    </location>
    <ligand>
        <name>GTP</name>
        <dbReference type="ChEBI" id="CHEBI:37565"/>
    </ligand>
</feature>
<feature type="binding site" evidence="2">
    <location>
        <position position="151"/>
    </location>
    <ligand>
        <name>GTP</name>
        <dbReference type="ChEBI" id="CHEBI:37565"/>
    </ligand>
</feature>
<feature type="binding site" evidence="2">
    <location>
        <position position="179"/>
    </location>
    <ligand>
        <name>GTP</name>
        <dbReference type="ChEBI" id="CHEBI:37565"/>
    </ligand>
</feature>
<feature type="binding site" evidence="2">
    <location>
        <position position="180"/>
    </location>
    <ligand>
        <name>GTP</name>
        <dbReference type="ChEBI" id="CHEBI:37565"/>
    </ligand>
</feature>
<feature type="modified residue" description="Cysteine methyl ester" evidence="1">
    <location>
        <position position="229"/>
    </location>
</feature>
<feature type="lipid moiety-binding region" description="S-geranylgeranyl cysteine" evidence="1">
    <location>
        <position position="227"/>
    </location>
</feature>
<feature type="lipid moiety-binding region" description="S-geranylgeranyl cysteine" evidence="1">
    <location>
        <position position="229"/>
    </location>
</feature>
<feature type="mutagenesis site" description="Affects interaction with ATG16L1." evidence="4">
    <original>T</original>
    <variation>N</variation>
    <location>
        <position position="47"/>
    </location>
</feature>
<feature type="mutagenesis site" description="Decreased GTPase catalytic efficiency." evidence="3">
    <original>Q</original>
    <variation>A</variation>
    <location>
        <position position="92"/>
    </location>
</feature>
<feature type="mutagenesis site" description="Does not affect interaction with ATG16L1. Induces lipidation of LC3. Decreased GTPase catalytic efficiency." evidence="3 4">
    <original>Q</original>
    <variation>L</variation>
    <location>
        <position position="92"/>
    </location>
</feature>
<feature type="strand" evidence="10">
    <location>
        <begin position="33"/>
        <end position="39"/>
    </location>
</feature>
<feature type="helix" evidence="10">
    <location>
        <begin position="46"/>
        <end position="55"/>
    </location>
</feature>
<feature type="strand" evidence="10">
    <location>
        <begin position="70"/>
        <end position="77"/>
    </location>
</feature>
<feature type="strand" evidence="10">
    <location>
        <begin position="80"/>
        <end position="88"/>
    </location>
</feature>
<feature type="helix" evidence="10">
    <location>
        <begin position="93"/>
        <end position="96"/>
    </location>
</feature>
<feature type="turn" evidence="10">
    <location>
        <begin position="97"/>
        <end position="99"/>
    </location>
</feature>
<feature type="helix" evidence="10">
    <location>
        <begin position="100"/>
        <end position="104"/>
    </location>
</feature>
<feature type="strand" evidence="10">
    <location>
        <begin position="109"/>
        <end position="115"/>
    </location>
</feature>
<feature type="helix" evidence="10">
    <location>
        <begin position="119"/>
        <end position="123"/>
    </location>
</feature>
<feature type="helix" evidence="10">
    <location>
        <begin position="125"/>
        <end position="135"/>
    </location>
</feature>
<feature type="strand" evidence="11">
    <location>
        <begin position="139"/>
        <end position="141"/>
    </location>
</feature>
<feature type="strand" evidence="10">
    <location>
        <begin position="143"/>
        <end position="148"/>
    </location>
</feature>
<feature type="helix" evidence="10">
    <location>
        <begin position="153"/>
        <end position="155"/>
    </location>
</feature>
<feature type="helix" evidence="10">
    <location>
        <begin position="160"/>
        <end position="169"/>
    </location>
</feature>
<feature type="strand" evidence="10">
    <location>
        <begin position="174"/>
        <end position="176"/>
    </location>
</feature>
<feature type="strand" evidence="10">
    <location>
        <begin position="179"/>
        <end position="181"/>
    </location>
</feature>
<feature type="helix" evidence="10">
    <location>
        <begin position="182"/>
        <end position="185"/>
    </location>
</feature>
<feature type="helix" evidence="10">
    <location>
        <begin position="188"/>
        <end position="195"/>
    </location>
</feature>
<reference key="1">
    <citation type="journal article" date="1998" name="J. Cell Sci.">
        <title>A novel Rab GTPase, Rab33B, is ubiquitously expressed and localized to the medial Golgi cisternae.</title>
        <authorList>
            <person name="Zheng J.Y."/>
            <person name="Koda T."/>
            <person name="Fujiwara T."/>
            <person name="Kishi M."/>
            <person name="Ikehara Y."/>
            <person name="Kakinuma M."/>
        </authorList>
    </citation>
    <scope>NUCLEOTIDE SEQUENCE [GENOMIC DNA / MRNA]</scope>
    <scope>SUBCELLULAR LOCATION</scope>
    <scope>TISSUE SPECIFICITY</scope>
    <source>
        <strain>C57BL/6J</strain>
        <tissue>Spleen</tissue>
    </source>
</reference>
<reference key="2">
    <citation type="journal article" date="2005" name="Science">
        <title>The transcriptional landscape of the mammalian genome.</title>
        <authorList>
            <person name="Carninci P."/>
            <person name="Kasukawa T."/>
            <person name="Katayama S."/>
            <person name="Gough J."/>
            <person name="Frith M.C."/>
            <person name="Maeda N."/>
            <person name="Oyama R."/>
            <person name="Ravasi T."/>
            <person name="Lenhard B."/>
            <person name="Wells C."/>
            <person name="Kodzius R."/>
            <person name="Shimokawa K."/>
            <person name="Bajic V.B."/>
            <person name="Brenner S.E."/>
            <person name="Batalov S."/>
            <person name="Forrest A.R."/>
            <person name="Zavolan M."/>
            <person name="Davis M.J."/>
            <person name="Wilming L.G."/>
            <person name="Aidinis V."/>
            <person name="Allen J.E."/>
            <person name="Ambesi-Impiombato A."/>
            <person name="Apweiler R."/>
            <person name="Aturaliya R.N."/>
            <person name="Bailey T.L."/>
            <person name="Bansal M."/>
            <person name="Baxter L."/>
            <person name="Beisel K.W."/>
            <person name="Bersano T."/>
            <person name="Bono H."/>
            <person name="Chalk A.M."/>
            <person name="Chiu K.P."/>
            <person name="Choudhary V."/>
            <person name="Christoffels A."/>
            <person name="Clutterbuck D.R."/>
            <person name="Crowe M.L."/>
            <person name="Dalla E."/>
            <person name="Dalrymple B.P."/>
            <person name="de Bono B."/>
            <person name="Della Gatta G."/>
            <person name="di Bernardo D."/>
            <person name="Down T."/>
            <person name="Engstrom P."/>
            <person name="Fagiolini M."/>
            <person name="Faulkner G."/>
            <person name="Fletcher C.F."/>
            <person name="Fukushima T."/>
            <person name="Furuno M."/>
            <person name="Futaki S."/>
            <person name="Gariboldi M."/>
            <person name="Georgii-Hemming P."/>
            <person name="Gingeras T.R."/>
            <person name="Gojobori T."/>
            <person name="Green R.E."/>
            <person name="Gustincich S."/>
            <person name="Harbers M."/>
            <person name="Hayashi Y."/>
            <person name="Hensch T.K."/>
            <person name="Hirokawa N."/>
            <person name="Hill D."/>
            <person name="Huminiecki L."/>
            <person name="Iacono M."/>
            <person name="Ikeo K."/>
            <person name="Iwama A."/>
            <person name="Ishikawa T."/>
            <person name="Jakt M."/>
            <person name="Kanapin A."/>
            <person name="Katoh M."/>
            <person name="Kawasawa Y."/>
            <person name="Kelso J."/>
            <person name="Kitamura H."/>
            <person name="Kitano H."/>
            <person name="Kollias G."/>
            <person name="Krishnan S.P."/>
            <person name="Kruger A."/>
            <person name="Kummerfeld S.K."/>
            <person name="Kurochkin I.V."/>
            <person name="Lareau L.F."/>
            <person name="Lazarevic D."/>
            <person name="Lipovich L."/>
            <person name="Liu J."/>
            <person name="Liuni S."/>
            <person name="McWilliam S."/>
            <person name="Madan Babu M."/>
            <person name="Madera M."/>
            <person name="Marchionni L."/>
            <person name="Matsuda H."/>
            <person name="Matsuzawa S."/>
            <person name="Miki H."/>
            <person name="Mignone F."/>
            <person name="Miyake S."/>
            <person name="Morris K."/>
            <person name="Mottagui-Tabar S."/>
            <person name="Mulder N."/>
            <person name="Nakano N."/>
            <person name="Nakauchi H."/>
            <person name="Ng P."/>
            <person name="Nilsson R."/>
            <person name="Nishiguchi S."/>
            <person name="Nishikawa S."/>
            <person name="Nori F."/>
            <person name="Ohara O."/>
            <person name="Okazaki Y."/>
            <person name="Orlando V."/>
            <person name="Pang K.C."/>
            <person name="Pavan W.J."/>
            <person name="Pavesi G."/>
            <person name="Pesole G."/>
            <person name="Petrovsky N."/>
            <person name="Piazza S."/>
            <person name="Reed J."/>
            <person name="Reid J.F."/>
            <person name="Ring B.Z."/>
            <person name="Ringwald M."/>
            <person name="Rost B."/>
            <person name="Ruan Y."/>
            <person name="Salzberg S.L."/>
            <person name="Sandelin A."/>
            <person name="Schneider C."/>
            <person name="Schoenbach C."/>
            <person name="Sekiguchi K."/>
            <person name="Semple C.A."/>
            <person name="Seno S."/>
            <person name="Sessa L."/>
            <person name="Sheng Y."/>
            <person name="Shibata Y."/>
            <person name="Shimada H."/>
            <person name="Shimada K."/>
            <person name="Silva D."/>
            <person name="Sinclair B."/>
            <person name="Sperling S."/>
            <person name="Stupka E."/>
            <person name="Sugiura K."/>
            <person name="Sultana R."/>
            <person name="Takenaka Y."/>
            <person name="Taki K."/>
            <person name="Tammoja K."/>
            <person name="Tan S.L."/>
            <person name="Tang S."/>
            <person name="Taylor M.S."/>
            <person name="Tegner J."/>
            <person name="Teichmann S.A."/>
            <person name="Ueda H.R."/>
            <person name="van Nimwegen E."/>
            <person name="Verardo R."/>
            <person name="Wei C.L."/>
            <person name="Yagi K."/>
            <person name="Yamanishi H."/>
            <person name="Zabarovsky E."/>
            <person name="Zhu S."/>
            <person name="Zimmer A."/>
            <person name="Hide W."/>
            <person name="Bult C."/>
            <person name="Grimmond S.M."/>
            <person name="Teasdale R.D."/>
            <person name="Liu E.T."/>
            <person name="Brusic V."/>
            <person name="Quackenbush J."/>
            <person name="Wahlestedt C."/>
            <person name="Mattick J.S."/>
            <person name="Hume D.A."/>
            <person name="Kai C."/>
            <person name="Sasaki D."/>
            <person name="Tomaru Y."/>
            <person name="Fukuda S."/>
            <person name="Kanamori-Katayama M."/>
            <person name="Suzuki M."/>
            <person name="Aoki J."/>
            <person name="Arakawa T."/>
            <person name="Iida J."/>
            <person name="Imamura K."/>
            <person name="Itoh M."/>
            <person name="Kato T."/>
            <person name="Kawaji H."/>
            <person name="Kawagashira N."/>
            <person name="Kawashima T."/>
            <person name="Kojima M."/>
            <person name="Kondo S."/>
            <person name="Konno H."/>
            <person name="Nakano K."/>
            <person name="Ninomiya N."/>
            <person name="Nishio T."/>
            <person name="Okada M."/>
            <person name="Plessy C."/>
            <person name="Shibata K."/>
            <person name="Shiraki T."/>
            <person name="Suzuki S."/>
            <person name="Tagami M."/>
            <person name="Waki K."/>
            <person name="Watahiki A."/>
            <person name="Okamura-Oho Y."/>
            <person name="Suzuki H."/>
            <person name="Kawai J."/>
            <person name="Hayashizaki Y."/>
        </authorList>
    </citation>
    <scope>NUCLEOTIDE SEQUENCE [LARGE SCALE MRNA]</scope>
    <source>
        <strain>C57BL/6J</strain>
        <tissue>Egg</tissue>
        <tissue>Liver</tissue>
        <tissue>Thymus</tissue>
    </source>
</reference>
<reference key="3">
    <citation type="journal article" date="2004" name="Genome Res.">
        <title>The status, quality, and expansion of the NIH full-length cDNA project: the Mammalian Gene Collection (MGC).</title>
        <authorList>
            <consortium name="The MGC Project Team"/>
        </authorList>
    </citation>
    <scope>NUCLEOTIDE SEQUENCE [LARGE SCALE MRNA]</scope>
    <source>
        <strain>C57BL/6J</strain>
        <tissue>Brain</tissue>
    </source>
</reference>
<reference key="4">
    <citation type="journal article" date="2006" name="Nature">
        <title>TBC-domain GAPs for Rab GTPases accelerate GTP hydrolysis by a dual-finger mechanism.</title>
        <authorList>
            <person name="Pan X."/>
            <person name="Eathiraj S."/>
            <person name="Munson M."/>
            <person name="Lambright D.G."/>
        </authorList>
    </citation>
    <scope>FUNCTION</scope>
    <scope>CATALYTIC ACTIVITY</scope>
    <scope>BIOPHYSICOCHEMICAL PROPERTIES</scope>
    <scope>MUTAGENESIS OF GLN-92</scope>
</reference>
<reference key="5">
    <citation type="submission" date="2007-04" db="UniProtKB">
        <authorList>
            <person name="Lubec G."/>
            <person name="Kang S.U."/>
        </authorList>
    </citation>
    <scope>PROTEIN SEQUENCE OF 84-94</scope>
    <scope>IDENTIFICATION BY MASS SPECTROMETRY</scope>
    <source>
        <strain>C57BL/6J</strain>
        <tissue>Brain</tissue>
    </source>
</reference>
<reference key="6">
    <citation type="journal article" date="2008" name="Mol. Biol. Cell">
        <title>Golgi-resident small GTPase Rab33B interacts with Atg16L and modulates autophagosome formation.</title>
        <authorList>
            <person name="Itoh T."/>
            <person name="Fujita N."/>
            <person name="Kanno E."/>
            <person name="Yamamoto A."/>
            <person name="Yoshimori T."/>
            <person name="Fukuda M."/>
        </authorList>
    </citation>
    <scope>FUNCTION</scope>
    <scope>INTERACTION WITH ATG16L1</scope>
    <scope>SUBCELLULAR LOCATION</scope>
    <scope>MUTAGENESIS OF THR-47 AND GLN-92</scope>
</reference>
<reference key="7">
    <citation type="journal article" date="2010" name="Cell">
        <title>A tissue-specific atlas of mouse protein phosphorylation and expression.</title>
        <authorList>
            <person name="Huttlin E.L."/>
            <person name="Jedrychowski M.P."/>
            <person name="Elias J.E."/>
            <person name="Goswami T."/>
            <person name="Rad R."/>
            <person name="Beausoleil S.A."/>
            <person name="Villen J."/>
            <person name="Haas W."/>
            <person name="Sowa M.E."/>
            <person name="Gygi S.P."/>
        </authorList>
    </citation>
    <scope>IDENTIFICATION BY MASS SPECTROMETRY [LARGE SCALE ANALYSIS]</scope>
    <source>
        <tissue>Brain</tissue>
        <tissue>Lung</tissue>
    </source>
</reference>
<reference key="8">
    <citation type="journal article" date="2011" name="Autophagy">
        <title>Atg16L2, a novel isoform of mammalian Atg16L that is not essential for canonical autophagy despite forming an Atg12-5-16L2 complex.</title>
        <authorList>
            <person name="Ishibashi K."/>
            <person name="Fujita N."/>
            <person name="Kanno E."/>
            <person name="Omori H."/>
            <person name="Yoshimori T."/>
            <person name="Itoh T."/>
            <person name="Fukuda M."/>
        </authorList>
    </citation>
    <scope>INTERACTION WITH ATG16L2</scope>
</reference>
<reference key="9">
    <citation type="journal article" date="2005" name="Nature">
        <title>Structural basis of family-wide Rab GTPase recognition by rabenosyn-5.</title>
        <authorList>
            <person name="Eathiraj S."/>
            <person name="Pan X."/>
            <person name="Ritacco C."/>
            <person name="Lambright D.G."/>
        </authorList>
    </citation>
    <scope>X-RAY CRYSTALLOGRAPHY (1.81 ANGSTROMS) OF 30-202 IN COMPLEX WITH GTP ANALOG</scope>
</reference>
<proteinExistence type="evidence at protein level"/>
<protein>
    <recommendedName>
        <fullName>Ras-related protein Rab-33B</fullName>
        <ecNumber evidence="3">3.6.5.2</ecNumber>
    </recommendedName>
</protein>
<evidence type="ECO:0000250" key="1"/>
<evidence type="ECO:0000250" key="2">
    <source>
        <dbReference type="UniProtKB" id="Q9H082"/>
    </source>
</evidence>
<evidence type="ECO:0000269" key="3">
    <source>
    </source>
</evidence>
<evidence type="ECO:0000269" key="4">
    <source>
    </source>
</evidence>
<evidence type="ECO:0000269" key="5">
    <source>
    </source>
</evidence>
<evidence type="ECO:0000269" key="6">
    <source>
    </source>
</evidence>
<evidence type="ECO:0000305" key="7"/>
<evidence type="ECO:0000305" key="8">
    <source>
    </source>
</evidence>
<evidence type="ECO:0000312" key="9">
    <source>
        <dbReference type="MGI" id="MGI:1330805"/>
    </source>
</evidence>
<evidence type="ECO:0007829" key="10">
    <source>
        <dbReference type="PDB" id="1Z06"/>
    </source>
</evidence>
<evidence type="ECO:0007829" key="11">
    <source>
        <dbReference type="PDB" id="2G77"/>
    </source>
</evidence>
<comment type="function">
    <text evidence="2 3 4">The small GTPases Rab are key regulators of intracellular membrane trafficking, from the formation of transport vesicles to their fusion with membranes. Rabs cycle between an inactive GDP-bound form and an active GTP-bound form that is able to recruit to membranes different sets of downstream effectors directly responsible for vesicle formation, movement, tethering and fusion (PubMed:16855591). RAB33B acts, in coordination with RAB6A, to regulate intra-Golgi retrograde trafficking (By similarity). Participates in autophagosome formation by recruiting the ATG12-ATG5-ATG16L1 complex to phagophores, probably in a nucleotide-independent manner (PubMed:18448665).</text>
</comment>
<comment type="catalytic activity">
    <reaction evidence="3">
        <text>GTP + H2O = GDP + phosphate + H(+)</text>
        <dbReference type="Rhea" id="RHEA:19669"/>
        <dbReference type="ChEBI" id="CHEBI:15377"/>
        <dbReference type="ChEBI" id="CHEBI:15378"/>
        <dbReference type="ChEBI" id="CHEBI:37565"/>
        <dbReference type="ChEBI" id="CHEBI:43474"/>
        <dbReference type="ChEBI" id="CHEBI:58189"/>
        <dbReference type="EC" id="3.6.5.2"/>
    </reaction>
    <physiologicalReaction direction="left-to-right" evidence="8">
        <dbReference type="Rhea" id="RHEA:19670"/>
    </physiologicalReaction>
</comment>
<comment type="cofactor">
    <cofactor evidence="2">
        <name>Mg(2+)</name>
        <dbReference type="ChEBI" id="CHEBI:18420"/>
    </cofactor>
</comment>
<comment type="activity regulation">
    <text evidence="2">Regulated by guanine nucleotide exchange factors (GEFs) which promote the exchange of bound GDP for free GTP. Regulated by GTPase activating proteins (GAPs) such as SGSM2 which increase the GTP hydrolysis activity. Inhibited by GDP dissociation inhibitors (GDIs).</text>
</comment>
<comment type="biophysicochemical properties">
    <kinetics>
        <KM evidence="3">25 uM for GTP</KM>
        <text evidence="3">kcat is 5.4 sec(-1) with GTP as substrate.</text>
    </kinetics>
</comment>
<comment type="subunit">
    <text evidence="2 4 5">Interacts (GTP- and GDP-bound forms) with ATG16L1; the complex consists of a tetramer where two RAB33B molecules bind independently one molecule of the ATG16L1 homodimer; the interaction promotes ATG12-ATG5-ATG16L1 complex recruitment to phagophores (PubMed:18448665). Interacts with ATG16L2; however interaction is approximately hundred times lower than for ATG16L1 (PubMed:22082872). Interacts with RIC1 (via C-terminus domain); the interaction is direct with a preference for RAB33B-GTP. Interacts with RGP1 (By similarity).</text>
</comment>
<comment type="interaction">
    <interactant intactId="EBI-6379521">
        <id>O35963</id>
    </interactant>
    <interactant intactId="EBI-8005">
        <id>Q08484</id>
        <label>GYP1</label>
    </interactant>
    <organismsDiffer>true</organismsDiffer>
    <experiments>3</experiments>
</comment>
<comment type="subcellular location">
    <subcellularLocation>
        <location evidence="4 6">Golgi apparatus membrane</location>
        <topology evidence="7">Lipid-anchor</topology>
    </subcellularLocation>
    <subcellularLocation>
        <location evidence="4">Golgi apparatus</location>
        <location evidence="4">cis-Golgi network</location>
    </subcellularLocation>
    <subcellularLocation>
        <location evidence="2">Preautophagosomal structure membrane</location>
    </subcellularLocation>
    <text evidence="2 6">Under starvation conditions punctate RAB33B-positive structures are often observed in the cytoplasm (PubMed:9512502). Under starved conditions RAB33B translocates from the Golgi to phagophores; this translocation is driven by interaction with ATG16L1 (By similarity).</text>
</comment>
<comment type="tissue specificity">
    <text evidence="6">Ubiquitous.</text>
</comment>
<comment type="domain">
    <text evidence="2">Switch 1, switch 2 and the interswitch regions are characteristic of Rab GTPases and mediate the interactions with Rab downstream effectors. The switch regions undergo conformational changes upon nucleotide binding which drive interaction with specific sets of effector proteins. Although most effectors only bind GTP-bound Rab, ATG16L1 effector binds both GTP- and GDP-bound RAB33B.</text>
</comment>
<comment type="PTM">
    <text evidence="2">Prenylated.</text>
</comment>
<comment type="similarity">
    <text evidence="7">Belongs to the small GTPase superfamily. Rab family.</text>
</comment>
<keyword id="KW-0002">3D-structure</keyword>
<keyword id="KW-0072">Autophagy</keyword>
<keyword id="KW-0903">Direct protein sequencing</keyword>
<keyword id="KW-0333">Golgi apparatus</keyword>
<keyword id="KW-0342">GTP-binding</keyword>
<keyword id="KW-0378">Hydrolase</keyword>
<keyword id="KW-0449">Lipoprotein</keyword>
<keyword id="KW-0460">Magnesium</keyword>
<keyword id="KW-0472">Membrane</keyword>
<keyword id="KW-0479">Metal-binding</keyword>
<keyword id="KW-0488">Methylation</keyword>
<keyword id="KW-0547">Nucleotide-binding</keyword>
<keyword id="KW-0636">Prenylation</keyword>
<keyword id="KW-0653">Protein transport</keyword>
<keyword id="KW-1185">Reference proteome</keyword>
<keyword id="KW-0813">Transport</keyword>
<name>RB33B_MOUSE</name>
<sequence>MTSEMESSLEVSFSSSCAVSGASGCLPPARSRIFKIIVIGDSNVGKTCLTYRFCAGRFPDRTEATIGVDFRERAVDIDGERIKIQLWDTAGQERFRKSMVQHYYRNVHAVVFVYDMTNMASFHSLPAWIEECKQHLLANDIPRILVGNKCDLRSAIQVPTDLAQKFADTHSMPLFETSAKNPNDNDHVEAIFMTLAHKLKSHKPLMLSQLPDNRISLKPETKPAVTCWC</sequence>